<reference key="1">
    <citation type="journal article" date="2007" name="Genome Biol.">
        <title>Characterization and modeling of the Haemophilus influenzae core and supragenomes based on the complete genomic sequences of Rd and 12 clinical nontypeable strains.</title>
        <authorList>
            <person name="Hogg J.S."/>
            <person name="Hu F.Z."/>
            <person name="Janto B."/>
            <person name="Boissy R."/>
            <person name="Hayes J."/>
            <person name="Keefe R."/>
            <person name="Post J.C."/>
            <person name="Ehrlich G.D."/>
        </authorList>
    </citation>
    <scope>NUCLEOTIDE SEQUENCE [LARGE SCALE GENOMIC DNA]</scope>
    <source>
        <strain>PittEE</strain>
    </source>
</reference>
<protein>
    <recommendedName>
        <fullName evidence="1">Diaminopimelate epimerase</fullName>
        <shortName evidence="1">DAP epimerase</shortName>
        <ecNumber evidence="1">5.1.1.7</ecNumber>
    </recommendedName>
    <alternativeName>
        <fullName evidence="1">PLP-independent amino acid racemase</fullName>
    </alternativeName>
</protein>
<keyword id="KW-0028">Amino-acid biosynthesis</keyword>
<keyword id="KW-0963">Cytoplasm</keyword>
<keyword id="KW-0413">Isomerase</keyword>
<keyword id="KW-0457">Lysine biosynthesis</keyword>
<sequence length="274" mass="30242">MQFSKMHGLGNDFVVVDGVTQNVFFTPETIRRLANRHCGIGFDQLLIVEAPYDPELDFHYRIFNADGSEVSQCGNGARCFARFVTLKGLTNKKDIAVSTQKGNMVLTVKDDNQIRVNMGEPIWEPAKIPFTANKFEKNYILRTDIQTVLCGAVSIGNPHCVVQVDDIQTANVEQLGPLLENHERFPERVNAGFMQIINKEHIKLRVYERGAGETQACGSGACAAVAVGIMQGLLNNNVQVDLPGGSLMIEWNGVGHPLYMTGEATHIYDGFITL</sequence>
<gene>
    <name evidence="1" type="primary">dapF</name>
    <name type="ordered locus">CGSHiEE_08355</name>
</gene>
<accession>A5UDX5</accession>
<dbReference type="EC" id="5.1.1.7" evidence="1"/>
<dbReference type="EMBL" id="CP000671">
    <property type="protein sequence ID" value="ABQ98976.1"/>
    <property type="molecule type" value="Genomic_DNA"/>
</dbReference>
<dbReference type="SMR" id="A5UDX5"/>
<dbReference type="KEGG" id="hip:CGSHiEE_08355"/>
<dbReference type="HOGENOM" id="CLU_053306_1_1_6"/>
<dbReference type="UniPathway" id="UPA00034">
    <property type="reaction ID" value="UER00025"/>
</dbReference>
<dbReference type="GO" id="GO:0005829">
    <property type="term" value="C:cytosol"/>
    <property type="evidence" value="ECO:0007669"/>
    <property type="project" value="TreeGrafter"/>
</dbReference>
<dbReference type="GO" id="GO:0008837">
    <property type="term" value="F:diaminopimelate epimerase activity"/>
    <property type="evidence" value="ECO:0007669"/>
    <property type="project" value="UniProtKB-UniRule"/>
</dbReference>
<dbReference type="GO" id="GO:0009089">
    <property type="term" value="P:lysine biosynthetic process via diaminopimelate"/>
    <property type="evidence" value="ECO:0007669"/>
    <property type="project" value="UniProtKB-UniRule"/>
</dbReference>
<dbReference type="FunFam" id="3.10.310.10:FF:000001">
    <property type="entry name" value="Diaminopimelate epimerase"/>
    <property type="match status" value="1"/>
</dbReference>
<dbReference type="FunFam" id="3.10.310.10:FF:000002">
    <property type="entry name" value="Diaminopimelate epimerase"/>
    <property type="match status" value="1"/>
</dbReference>
<dbReference type="Gene3D" id="3.10.310.10">
    <property type="entry name" value="Diaminopimelate Epimerase, Chain A, domain 1"/>
    <property type="match status" value="2"/>
</dbReference>
<dbReference type="HAMAP" id="MF_00197">
    <property type="entry name" value="DAP_epimerase"/>
    <property type="match status" value="1"/>
</dbReference>
<dbReference type="InterPro" id="IPR018510">
    <property type="entry name" value="DAP_epimerase_AS"/>
</dbReference>
<dbReference type="InterPro" id="IPR001653">
    <property type="entry name" value="DAP_epimerase_DapF"/>
</dbReference>
<dbReference type="NCBIfam" id="TIGR00652">
    <property type="entry name" value="DapF"/>
    <property type="match status" value="1"/>
</dbReference>
<dbReference type="PANTHER" id="PTHR31689:SF0">
    <property type="entry name" value="DIAMINOPIMELATE EPIMERASE"/>
    <property type="match status" value="1"/>
</dbReference>
<dbReference type="PANTHER" id="PTHR31689">
    <property type="entry name" value="DIAMINOPIMELATE EPIMERASE, CHLOROPLASTIC"/>
    <property type="match status" value="1"/>
</dbReference>
<dbReference type="Pfam" id="PF01678">
    <property type="entry name" value="DAP_epimerase"/>
    <property type="match status" value="2"/>
</dbReference>
<dbReference type="SUPFAM" id="SSF54506">
    <property type="entry name" value="Diaminopimelate epimerase-like"/>
    <property type="match status" value="1"/>
</dbReference>
<dbReference type="PROSITE" id="PS01326">
    <property type="entry name" value="DAP_EPIMERASE"/>
    <property type="match status" value="1"/>
</dbReference>
<name>DAPF_HAEIE</name>
<organism>
    <name type="scientific">Haemophilus influenzae (strain PittEE)</name>
    <dbReference type="NCBI Taxonomy" id="374930"/>
    <lineage>
        <taxon>Bacteria</taxon>
        <taxon>Pseudomonadati</taxon>
        <taxon>Pseudomonadota</taxon>
        <taxon>Gammaproteobacteria</taxon>
        <taxon>Pasteurellales</taxon>
        <taxon>Pasteurellaceae</taxon>
        <taxon>Haemophilus</taxon>
    </lineage>
</organism>
<feature type="chain" id="PRO_1000011885" description="Diaminopimelate epimerase">
    <location>
        <begin position="1"/>
        <end position="274"/>
    </location>
</feature>
<feature type="active site" description="Proton donor" evidence="1">
    <location>
        <position position="73"/>
    </location>
</feature>
<feature type="active site" description="Proton acceptor" evidence="1">
    <location>
        <position position="217"/>
    </location>
</feature>
<feature type="binding site" evidence="1">
    <location>
        <position position="11"/>
    </location>
    <ligand>
        <name>substrate</name>
    </ligand>
</feature>
<feature type="binding site" evidence="1">
    <location>
        <position position="44"/>
    </location>
    <ligand>
        <name>substrate</name>
    </ligand>
</feature>
<feature type="binding site" evidence="1">
    <location>
        <position position="64"/>
    </location>
    <ligand>
        <name>substrate</name>
    </ligand>
</feature>
<feature type="binding site" evidence="1">
    <location>
        <begin position="74"/>
        <end position="75"/>
    </location>
    <ligand>
        <name>substrate</name>
    </ligand>
</feature>
<feature type="binding site" evidence="1">
    <location>
        <position position="157"/>
    </location>
    <ligand>
        <name>substrate</name>
    </ligand>
</feature>
<feature type="binding site" evidence="1">
    <location>
        <position position="190"/>
    </location>
    <ligand>
        <name>substrate</name>
    </ligand>
</feature>
<feature type="binding site" evidence="1">
    <location>
        <begin position="208"/>
        <end position="209"/>
    </location>
    <ligand>
        <name>substrate</name>
    </ligand>
</feature>
<feature type="binding site" evidence="1">
    <location>
        <begin position="218"/>
        <end position="219"/>
    </location>
    <ligand>
        <name>substrate</name>
    </ligand>
</feature>
<feature type="site" description="Could be important to modulate the pK values of the two catalytic cysteine residues" evidence="1">
    <location>
        <position position="159"/>
    </location>
</feature>
<feature type="site" description="Could be important to modulate the pK values of the two catalytic cysteine residues" evidence="1">
    <location>
        <position position="208"/>
    </location>
</feature>
<feature type="site" description="Important for dimerization" evidence="1">
    <location>
        <position position="268"/>
    </location>
</feature>
<proteinExistence type="inferred from homology"/>
<comment type="function">
    <text evidence="1">Catalyzes the stereoinversion of LL-2,6-diaminopimelate (L,L-DAP) to meso-diaminopimelate (meso-DAP), a precursor of L-lysine and an essential component of the bacterial peptidoglycan.</text>
</comment>
<comment type="catalytic activity">
    <reaction evidence="1">
        <text>(2S,6S)-2,6-diaminopimelate = meso-2,6-diaminopimelate</text>
        <dbReference type="Rhea" id="RHEA:15393"/>
        <dbReference type="ChEBI" id="CHEBI:57609"/>
        <dbReference type="ChEBI" id="CHEBI:57791"/>
        <dbReference type="EC" id="5.1.1.7"/>
    </reaction>
</comment>
<comment type="pathway">
    <text evidence="1">Amino-acid biosynthesis; L-lysine biosynthesis via DAP pathway; DL-2,6-diaminopimelate from LL-2,6-diaminopimelate: step 1/1.</text>
</comment>
<comment type="subunit">
    <text evidence="1">Homodimer.</text>
</comment>
<comment type="subcellular location">
    <subcellularLocation>
        <location evidence="1">Cytoplasm</location>
    </subcellularLocation>
</comment>
<comment type="similarity">
    <text evidence="1">Belongs to the diaminopimelate epimerase family.</text>
</comment>
<evidence type="ECO:0000255" key="1">
    <source>
        <dbReference type="HAMAP-Rule" id="MF_00197"/>
    </source>
</evidence>